<keyword id="KW-0963">Cytoplasm</keyword>
<keyword id="KW-0597">Phosphoprotein</keyword>
<keyword id="KW-1185">Reference proteome</keyword>
<keyword id="KW-0728">SH3 domain</keyword>
<accession>Q9UUD0</accession>
<dbReference type="EMBL" id="CU329671">
    <property type="protein sequence ID" value="CAB52037.1"/>
    <property type="molecule type" value="Genomic_DNA"/>
</dbReference>
<dbReference type="PIR" id="T39801">
    <property type="entry name" value="T39801"/>
</dbReference>
<dbReference type="RefSeq" id="NP_595695.1">
    <property type="nucleotide sequence ID" value="NM_001021592.2"/>
</dbReference>
<dbReference type="SMR" id="Q9UUD0"/>
<dbReference type="BioGRID" id="277279">
    <property type="interactions" value="2"/>
</dbReference>
<dbReference type="FunCoup" id="Q9UUD0">
    <property type="interactions" value="500"/>
</dbReference>
<dbReference type="STRING" id="284812.Q9UUD0"/>
<dbReference type="iPTMnet" id="Q9UUD0"/>
<dbReference type="PaxDb" id="4896-SPBC19C2.10.1"/>
<dbReference type="EnsemblFungi" id="SPBC19C2.10.1">
    <property type="protein sequence ID" value="SPBC19C2.10.1:pep"/>
    <property type="gene ID" value="SPBC19C2.10"/>
</dbReference>
<dbReference type="KEGG" id="spo:2540758"/>
<dbReference type="PomBase" id="SPBC19C2.10"/>
<dbReference type="VEuPathDB" id="FungiDB:SPBC19C2.10"/>
<dbReference type="eggNOG" id="KOG1118">
    <property type="taxonomic scope" value="Eukaryota"/>
</dbReference>
<dbReference type="HOGENOM" id="CLU_554500_0_0_1"/>
<dbReference type="InParanoid" id="Q9UUD0"/>
<dbReference type="OMA" id="FKPKGMC"/>
<dbReference type="PhylomeDB" id="Q9UUD0"/>
<dbReference type="Reactome" id="R-SPO-437239">
    <property type="pathway name" value="Recycling pathway of L1"/>
</dbReference>
<dbReference type="Reactome" id="R-SPO-8856828">
    <property type="pathway name" value="Clathrin-mediated endocytosis"/>
</dbReference>
<dbReference type="PRO" id="PR:Q9UUD0"/>
<dbReference type="Proteomes" id="UP000002485">
    <property type="component" value="Chromosome II"/>
</dbReference>
<dbReference type="GO" id="GO:0032153">
    <property type="term" value="C:cell division site"/>
    <property type="evidence" value="ECO:0007005"/>
    <property type="project" value="PomBase"/>
</dbReference>
<dbReference type="GO" id="GO:0005737">
    <property type="term" value="C:cytoplasm"/>
    <property type="evidence" value="ECO:0007005"/>
    <property type="project" value="PomBase"/>
</dbReference>
<dbReference type="GO" id="GO:0005829">
    <property type="term" value="C:cytosol"/>
    <property type="evidence" value="ECO:0007005"/>
    <property type="project" value="PomBase"/>
</dbReference>
<dbReference type="GO" id="GO:0008289">
    <property type="term" value="F:lipid binding"/>
    <property type="evidence" value="ECO:0000255"/>
    <property type="project" value="PomBase"/>
</dbReference>
<dbReference type="GO" id="GO:0180020">
    <property type="term" value="F:membrane bending activity"/>
    <property type="evidence" value="ECO:0000304"/>
    <property type="project" value="PomBase"/>
</dbReference>
<dbReference type="GO" id="GO:0006897">
    <property type="term" value="P:endocytosis"/>
    <property type="evidence" value="ECO:0000250"/>
    <property type="project" value="PomBase"/>
</dbReference>
<dbReference type="CDD" id="cd07593">
    <property type="entry name" value="BAR_MUG137_fungi"/>
    <property type="match status" value="1"/>
</dbReference>
<dbReference type="FunFam" id="1.20.1270.60:FF:000174">
    <property type="entry name" value="Meiotically up-regulated gene 137 protein"/>
    <property type="match status" value="1"/>
</dbReference>
<dbReference type="FunFam" id="2.30.30.40:FF:000418">
    <property type="entry name" value="Meiotically up-regulated gene 137 protein"/>
    <property type="match status" value="1"/>
</dbReference>
<dbReference type="Gene3D" id="1.20.1270.60">
    <property type="entry name" value="Arfaptin homology (AH) domain/BAR domain"/>
    <property type="match status" value="1"/>
</dbReference>
<dbReference type="Gene3D" id="2.30.30.40">
    <property type="entry name" value="SH3 Domains"/>
    <property type="match status" value="1"/>
</dbReference>
<dbReference type="InterPro" id="IPR027267">
    <property type="entry name" value="AH/BAR_dom_sf"/>
</dbReference>
<dbReference type="InterPro" id="IPR004148">
    <property type="entry name" value="BAR_dom"/>
</dbReference>
<dbReference type="InterPro" id="IPR050384">
    <property type="entry name" value="Endophilin_SH3RF"/>
</dbReference>
<dbReference type="InterPro" id="IPR036028">
    <property type="entry name" value="SH3-like_dom_sf"/>
</dbReference>
<dbReference type="InterPro" id="IPR001452">
    <property type="entry name" value="SH3_domain"/>
</dbReference>
<dbReference type="PANTHER" id="PTHR14167:SF116">
    <property type="entry name" value="CAP, ISOFORM AC"/>
    <property type="match status" value="1"/>
</dbReference>
<dbReference type="PANTHER" id="PTHR14167">
    <property type="entry name" value="SH3 DOMAIN-CONTAINING"/>
    <property type="match status" value="1"/>
</dbReference>
<dbReference type="Pfam" id="PF03114">
    <property type="entry name" value="BAR"/>
    <property type="match status" value="1"/>
</dbReference>
<dbReference type="Pfam" id="PF14604">
    <property type="entry name" value="SH3_9"/>
    <property type="match status" value="1"/>
</dbReference>
<dbReference type="PRINTS" id="PR00452">
    <property type="entry name" value="SH3DOMAIN"/>
</dbReference>
<dbReference type="SMART" id="SM00721">
    <property type="entry name" value="BAR"/>
    <property type="match status" value="1"/>
</dbReference>
<dbReference type="SMART" id="SM00326">
    <property type="entry name" value="SH3"/>
    <property type="match status" value="1"/>
</dbReference>
<dbReference type="SUPFAM" id="SSF103657">
    <property type="entry name" value="BAR/IMD domain-like"/>
    <property type="match status" value="1"/>
</dbReference>
<dbReference type="SUPFAM" id="SSF50044">
    <property type="entry name" value="SH3-domain"/>
    <property type="match status" value="1"/>
</dbReference>
<dbReference type="PROSITE" id="PS51021">
    <property type="entry name" value="BAR"/>
    <property type="match status" value="1"/>
</dbReference>
<dbReference type="PROSITE" id="PS50002">
    <property type="entry name" value="SH3"/>
    <property type="match status" value="1"/>
</dbReference>
<feature type="chain" id="PRO_0000303940" description="Uncharacterized protein C19C2.10">
    <location>
        <begin position="1"/>
        <end position="501"/>
    </location>
</feature>
<feature type="domain" description="BAR" evidence="2">
    <location>
        <begin position="14"/>
        <end position="237"/>
    </location>
</feature>
<feature type="domain" description="SH3" evidence="1">
    <location>
        <begin position="421"/>
        <end position="487"/>
    </location>
</feature>
<feature type="region of interest" description="Disordered" evidence="3">
    <location>
        <begin position="302"/>
        <end position="321"/>
    </location>
</feature>
<feature type="region of interest" description="Disordered" evidence="3">
    <location>
        <begin position="329"/>
        <end position="414"/>
    </location>
</feature>
<feature type="compositionally biased region" description="Basic and acidic residues" evidence="3">
    <location>
        <begin position="309"/>
        <end position="320"/>
    </location>
</feature>
<feature type="compositionally biased region" description="Polar residues" evidence="3">
    <location>
        <begin position="390"/>
        <end position="402"/>
    </location>
</feature>
<feature type="modified residue" description="Phosphothreonine" evidence="5">
    <location>
        <position position="285"/>
    </location>
</feature>
<feature type="modified residue" description="Phosphoserine" evidence="5">
    <location>
        <position position="414"/>
    </location>
</feature>
<evidence type="ECO:0000255" key="1">
    <source>
        <dbReference type="PROSITE-ProRule" id="PRU00192"/>
    </source>
</evidence>
<evidence type="ECO:0000255" key="2">
    <source>
        <dbReference type="PROSITE-ProRule" id="PRU00361"/>
    </source>
</evidence>
<evidence type="ECO:0000256" key="3">
    <source>
        <dbReference type="SAM" id="MobiDB-lite"/>
    </source>
</evidence>
<evidence type="ECO:0000269" key="4">
    <source>
    </source>
</evidence>
<evidence type="ECO:0000269" key="5">
    <source>
    </source>
</evidence>
<proteinExistence type="evidence at protein level"/>
<name>YNQA_SCHPO</name>
<organism>
    <name type="scientific">Schizosaccharomyces pombe (strain 972 / ATCC 24843)</name>
    <name type="common">Fission yeast</name>
    <dbReference type="NCBI Taxonomy" id="284812"/>
    <lineage>
        <taxon>Eukaryota</taxon>
        <taxon>Fungi</taxon>
        <taxon>Dikarya</taxon>
        <taxon>Ascomycota</taxon>
        <taxon>Taphrinomycotina</taxon>
        <taxon>Schizosaccharomycetes</taxon>
        <taxon>Schizosaccharomycetales</taxon>
        <taxon>Schizosaccharomycetaceae</taxon>
        <taxon>Schizosaccharomyces</taxon>
    </lineage>
</organism>
<protein>
    <recommendedName>
        <fullName>Uncharacterized protein C19C2.10</fullName>
    </recommendedName>
</protein>
<reference key="1">
    <citation type="journal article" date="2002" name="Nature">
        <title>The genome sequence of Schizosaccharomyces pombe.</title>
        <authorList>
            <person name="Wood V."/>
            <person name="Gwilliam R."/>
            <person name="Rajandream M.A."/>
            <person name="Lyne M.H."/>
            <person name="Lyne R."/>
            <person name="Stewart A."/>
            <person name="Sgouros J.G."/>
            <person name="Peat N."/>
            <person name="Hayles J."/>
            <person name="Baker S.G."/>
            <person name="Basham D."/>
            <person name="Bowman S."/>
            <person name="Brooks K."/>
            <person name="Brown D."/>
            <person name="Brown S."/>
            <person name="Chillingworth T."/>
            <person name="Churcher C.M."/>
            <person name="Collins M."/>
            <person name="Connor R."/>
            <person name="Cronin A."/>
            <person name="Davis P."/>
            <person name="Feltwell T."/>
            <person name="Fraser A."/>
            <person name="Gentles S."/>
            <person name="Goble A."/>
            <person name="Hamlin N."/>
            <person name="Harris D.E."/>
            <person name="Hidalgo J."/>
            <person name="Hodgson G."/>
            <person name="Holroyd S."/>
            <person name="Hornsby T."/>
            <person name="Howarth S."/>
            <person name="Huckle E.J."/>
            <person name="Hunt S."/>
            <person name="Jagels K."/>
            <person name="James K.D."/>
            <person name="Jones L."/>
            <person name="Jones M."/>
            <person name="Leather S."/>
            <person name="McDonald S."/>
            <person name="McLean J."/>
            <person name="Mooney P."/>
            <person name="Moule S."/>
            <person name="Mungall K.L."/>
            <person name="Murphy L.D."/>
            <person name="Niblett D."/>
            <person name="Odell C."/>
            <person name="Oliver K."/>
            <person name="O'Neil S."/>
            <person name="Pearson D."/>
            <person name="Quail M.A."/>
            <person name="Rabbinowitsch E."/>
            <person name="Rutherford K.M."/>
            <person name="Rutter S."/>
            <person name="Saunders D."/>
            <person name="Seeger K."/>
            <person name="Sharp S."/>
            <person name="Skelton J."/>
            <person name="Simmonds M.N."/>
            <person name="Squares R."/>
            <person name="Squares S."/>
            <person name="Stevens K."/>
            <person name="Taylor K."/>
            <person name="Taylor R.G."/>
            <person name="Tivey A."/>
            <person name="Walsh S.V."/>
            <person name="Warren T."/>
            <person name="Whitehead S."/>
            <person name="Woodward J.R."/>
            <person name="Volckaert G."/>
            <person name="Aert R."/>
            <person name="Robben J."/>
            <person name="Grymonprez B."/>
            <person name="Weltjens I."/>
            <person name="Vanstreels E."/>
            <person name="Rieger M."/>
            <person name="Schaefer M."/>
            <person name="Mueller-Auer S."/>
            <person name="Gabel C."/>
            <person name="Fuchs M."/>
            <person name="Duesterhoeft A."/>
            <person name="Fritzc C."/>
            <person name="Holzer E."/>
            <person name="Moestl D."/>
            <person name="Hilbert H."/>
            <person name="Borzym K."/>
            <person name="Langer I."/>
            <person name="Beck A."/>
            <person name="Lehrach H."/>
            <person name="Reinhardt R."/>
            <person name="Pohl T.M."/>
            <person name="Eger P."/>
            <person name="Zimmermann W."/>
            <person name="Wedler H."/>
            <person name="Wambutt R."/>
            <person name="Purnelle B."/>
            <person name="Goffeau A."/>
            <person name="Cadieu E."/>
            <person name="Dreano S."/>
            <person name="Gloux S."/>
            <person name="Lelaure V."/>
            <person name="Mottier S."/>
            <person name="Galibert F."/>
            <person name="Aves S.J."/>
            <person name="Xiang Z."/>
            <person name="Hunt C."/>
            <person name="Moore K."/>
            <person name="Hurst S.M."/>
            <person name="Lucas M."/>
            <person name="Rochet M."/>
            <person name="Gaillardin C."/>
            <person name="Tallada V.A."/>
            <person name="Garzon A."/>
            <person name="Thode G."/>
            <person name="Daga R.R."/>
            <person name="Cruzado L."/>
            <person name="Jimenez J."/>
            <person name="Sanchez M."/>
            <person name="del Rey F."/>
            <person name="Benito J."/>
            <person name="Dominguez A."/>
            <person name="Revuelta J.L."/>
            <person name="Moreno S."/>
            <person name="Armstrong J."/>
            <person name="Forsburg S.L."/>
            <person name="Cerutti L."/>
            <person name="Lowe T."/>
            <person name="McCombie W.R."/>
            <person name="Paulsen I."/>
            <person name="Potashkin J."/>
            <person name="Shpakovski G.V."/>
            <person name="Ussery D."/>
            <person name="Barrell B.G."/>
            <person name="Nurse P."/>
        </authorList>
    </citation>
    <scope>NUCLEOTIDE SEQUENCE [LARGE SCALE GENOMIC DNA]</scope>
    <source>
        <strain>972 / ATCC 24843</strain>
    </source>
</reference>
<reference key="2">
    <citation type="journal article" date="2006" name="Nat. Biotechnol.">
        <title>ORFeome cloning and global analysis of protein localization in the fission yeast Schizosaccharomyces pombe.</title>
        <authorList>
            <person name="Matsuyama A."/>
            <person name="Arai R."/>
            <person name="Yashiroda Y."/>
            <person name="Shirai A."/>
            <person name="Kamata A."/>
            <person name="Sekido S."/>
            <person name="Kobayashi Y."/>
            <person name="Hashimoto A."/>
            <person name="Hamamoto M."/>
            <person name="Hiraoka Y."/>
            <person name="Horinouchi S."/>
            <person name="Yoshida M."/>
        </authorList>
    </citation>
    <scope>SUBCELLULAR LOCATION [LARGE SCALE ANALYSIS]</scope>
</reference>
<reference key="3">
    <citation type="journal article" date="2008" name="J. Proteome Res.">
        <title>Phosphoproteome analysis of fission yeast.</title>
        <authorList>
            <person name="Wilson-Grady J.T."/>
            <person name="Villen J."/>
            <person name="Gygi S.P."/>
        </authorList>
    </citation>
    <scope>PHOSPHORYLATION [LARGE SCALE ANALYSIS] AT THR-285 AND SER-414</scope>
    <scope>IDENTIFICATION BY MASS SPECTROMETRY</scope>
</reference>
<gene>
    <name type="ORF">SPBC19C2.10</name>
</gene>
<comment type="subcellular location">
    <subcellularLocation>
        <location evidence="4">Cytoplasm</location>
    </subcellularLocation>
    <text>Localizes at the barrier septum.</text>
</comment>
<sequence length="501" mass="56733">MNKHFAKLSQWTGEKFGFDRQKTTLSDDFCSLKGETDAWLVGMDKIHRSCTRWVRNMDKRKGLLDEKDKQLPVTHVGSSFVELGQALSHSSSNSHTYIMYGKSMVEIGHLQEEFMDYLNNSFLANLENSLAEFKALDVKEKKMENRRLVFDALSTKIQKAKKEESKLEEDLRNARAKYEESLEEFEDRMVQLKELEPDRVENVVRLLQMQIRFHQKSLDLLKGLEMNGFSKKRDNVNIPKRTYSARSIPSNISSTNVATTPSNTIFEMDDTLKADSSSNEYHSPTNTLPSYHTEADLDNSSIASSNRTQHTEDNYNKDVSDAQNSLGQSAVDLTTPSSPPIPRHTKPKLSTTQSTPVKPASLQSEEDIQLSFKQPELSASSAELDEKLKSQCNVSPSPSNISDAPPSKLNRSYSSPLASISSRKVVRMKYSFEPETENELKLKKGDLLLVLKEIDEGWWVGEKLGEDGVFTGNTGMFPSNYCVPAHPWDKTFRAFLKKGFK</sequence>